<name>ATPF_STRTD</name>
<dbReference type="EMBL" id="CP000419">
    <property type="protein sequence ID" value="ABJ65795.1"/>
    <property type="molecule type" value="Genomic_DNA"/>
</dbReference>
<dbReference type="RefSeq" id="WP_011225594.1">
    <property type="nucleotide sequence ID" value="NC_008532.1"/>
</dbReference>
<dbReference type="SMR" id="Q03LX7"/>
<dbReference type="GeneID" id="66898390"/>
<dbReference type="KEGG" id="ste:STER_0517"/>
<dbReference type="HOGENOM" id="CLU_079215_4_2_9"/>
<dbReference type="GO" id="GO:0005886">
    <property type="term" value="C:plasma membrane"/>
    <property type="evidence" value="ECO:0007669"/>
    <property type="project" value="UniProtKB-SubCell"/>
</dbReference>
<dbReference type="GO" id="GO:0045259">
    <property type="term" value="C:proton-transporting ATP synthase complex"/>
    <property type="evidence" value="ECO:0007669"/>
    <property type="project" value="UniProtKB-KW"/>
</dbReference>
<dbReference type="GO" id="GO:0046933">
    <property type="term" value="F:proton-transporting ATP synthase activity, rotational mechanism"/>
    <property type="evidence" value="ECO:0007669"/>
    <property type="project" value="UniProtKB-UniRule"/>
</dbReference>
<dbReference type="GO" id="GO:0046961">
    <property type="term" value="F:proton-transporting ATPase activity, rotational mechanism"/>
    <property type="evidence" value="ECO:0007669"/>
    <property type="project" value="TreeGrafter"/>
</dbReference>
<dbReference type="CDD" id="cd06503">
    <property type="entry name" value="ATP-synt_Fo_b"/>
    <property type="match status" value="1"/>
</dbReference>
<dbReference type="Gene3D" id="6.10.250.1580">
    <property type="match status" value="1"/>
</dbReference>
<dbReference type="HAMAP" id="MF_01398">
    <property type="entry name" value="ATP_synth_b_bprime"/>
    <property type="match status" value="1"/>
</dbReference>
<dbReference type="InterPro" id="IPR028987">
    <property type="entry name" value="ATP_synth_B-like_membr_sf"/>
</dbReference>
<dbReference type="InterPro" id="IPR002146">
    <property type="entry name" value="ATP_synth_b/b'su_bac/chlpt"/>
</dbReference>
<dbReference type="InterPro" id="IPR005864">
    <property type="entry name" value="ATP_synth_F0_bsu_bac"/>
</dbReference>
<dbReference type="InterPro" id="IPR050059">
    <property type="entry name" value="ATP_synthase_B_chain"/>
</dbReference>
<dbReference type="NCBIfam" id="TIGR01144">
    <property type="entry name" value="ATP_synt_b"/>
    <property type="match status" value="1"/>
</dbReference>
<dbReference type="PANTHER" id="PTHR33445:SF1">
    <property type="entry name" value="ATP SYNTHASE SUBUNIT B"/>
    <property type="match status" value="1"/>
</dbReference>
<dbReference type="PANTHER" id="PTHR33445">
    <property type="entry name" value="ATP SYNTHASE SUBUNIT B', CHLOROPLASTIC"/>
    <property type="match status" value="1"/>
</dbReference>
<dbReference type="Pfam" id="PF00430">
    <property type="entry name" value="ATP-synt_B"/>
    <property type="match status" value="1"/>
</dbReference>
<dbReference type="SUPFAM" id="SSF81573">
    <property type="entry name" value="F1F0 ATP synthase subunit B, membrane domain"/>
    <property type="match status" value="1"/>
</dbReference>
<sequence>MSLLINSTTLGNIIITLGSVFLLYYLIRKFAWDQITGIFVAREKKIATDIDSAENARQEAEILVQKRQEELAAARTEATQIIDEAKKTGKTKESKIIAEAYDEAKRLKEKANQDIAQSWVEALAGVKGEVADLTVLLAEKVMKQNLDAKAQSDLIDSYLDQLGDA</sequence>
<gene>
    <name evidence="1" type="primary">atpF</name>
    <name type="ordered locus">STER_0517</name>
</gene>
<reference key="1">
    <citation type="journal article" date="2006" name="Proc. Natl. Acad. Sci. U.S.A.">
        <title>Comparative genomics of the lactic acid bacteria.</title>
        <authorList>
            <person name="Makarova K.S."/>
            <person name="Slesarev A."/>
            <person name="Wolf Y.I."/>
            <person name="Sorokin A."/>
            <person name="Mirkin B."/>
            <person name="Koonin E.V."/>
            <person name="Pavlov A."/>
            <person name="Pavlova N."/>
            <person name="Karamychev V."/>
            <person name="Polouchine N."/>
            <person name="Shakhova V."/>
            <person name="Grigoriev I."/>
            <person name="Lou Y."/>
            <person name="Rohksar D."/>
            <person name="Lucas S."/>
            <person name="Huang K."/>
            <person name="Goodstein D.M."/>
            <person name="Hawkins T."/>
            <person name="Plengvidhya V."/>
            <person name="Welker D."/>
            <person name="Hughes J."/>
            <person name="Goh Y."/>
            <person name="Benson A."/>
            <person name="Baldwin K."/>
            <person name="Lee J.-H."/>
            <person name="Diaz-Muniz I."/>
            <person name="Dosti B."/>
            <person name="Smeianov V."/>
            <person name="Wechter W."/>
            <person name="Barabote R."/>
            <person name="Lorca G."/>
            <person name="Altermann E."/>
            <person name="Barrangou R."/>
            <person name="Ganesan B."/>
            <person name="Xie Y."/>
            <person name="Rawsthorne H."/>
            <person name="Tamir D."/>
            <person name="Parker C."/>
            <person name="Breidt F."/>
            <person name="Broadbent J.R."/>
            <person name="Hutkins R."/>
            <person name="O'Sullivan D."/>
            <person name="Steele J."/>
            <person name="Unlu G."/>
            <person name="Saier M.H. Jr."/>
            <person name="Klaenhammer T."/>
            <person name="Richardson P."/>
            <person name="Kozyavkin S."/>
            <person name="Weimer B.C."/>
            <person name="Mills D.A."/>
        </authorList>
    </citation>
    <scope>NUCLEOTIDE SEQUENCE [LARGE SCALE GENOMIC DNA]</scope>
    <source>
        <strain>ATCC BAA-491 / LMD-9</strain>
    </source>
</reference>
<proteinExistence type="inferred from homology"/>
<evidence type="ECO:0000255" key="1">
    <source>
        <dbReference type="HAMAP-Rule" id="MF_01398"/>
    </source>
</evidence>
<protein>
    <recommendedName>
        <fullName evidence="1">ATP synthase subunit b</fullName>
    </recommendedName>
    <alternativeName>
        <fullName evidence="1">ATP synthase F(0) sector subunit b</fullName>
    </alternativeName>
    <alternativeName>
        <fullName evidence="1">ATPase subunit I</fullName>
    </alternativeName>
    <alternativeName>
        <fullName evidence="1">F-type ATPase subunit b</fullName>
        <shortName evidence="1">F-ATPase subunit b</shortName>
    </alternativeName>
</protein>
<accession>Q03LX7</accession>
<organism>
    <name type="scientific">Streptococcus thermophilus (strain ATCC BAA-491 / LMD-9)</name>
    <dbReference type="NCBI Taxonomy" id="322159"/>
    <lineage>
        <taxon>Bacteria</taxon>
        <taxon>Bacillati</taxon>
        <taxon>Bacillota</taxon>
        <taxon>Bacilli</taxon>
        <taxon>Lactobacillales</taxon>
        <taxon>Streptococcaceae</taxon>
        <taxon>Streptococcus</taxon>
    </lineage>
</organism>
<keyword id="KW-0066">ATP synthesis</keyword>
<keyword id="KW-1003">Cell membrane</keyword>
<keyword id="KW-0138">CF(0)</keyword>
<keyword id="KW-0375">Hydrogen ion transport</keyword>
<keyword id="KW-0406">Ion transport</keyword>
<keyword id="KW-0472">Membrane</keyword>
<keyword id="KW-0812">Transmembrane</keyword>
<keyword id="KW-1133">Transmembrane helix</keyword>
<keyword id="KW-0813">Transport</keyword>
<comment type="function">
    <text evidence="1">F(1)F(0) ATP synthase produces ATP from ADP in the presence of a proton or sodium gradient. F-type ATPases consist of two structural domains, F(1) containing the extramembraneous catalytic core and F(0) containing the membrane proton channel, linked together by a central stalk and a peripheral stalk. During catalysis, ATP synthesis in the catalytic domain of F(1) is coupled via a rotary mechanism of the central stalk subunits to proton translocation.</text>
</comment>
<comment type="function">
    <text evidence="1">Component of the F(0) channel, it forms part of the peripheral stalk, linking F(1) to F(0).</text>
</comment>
<comment type="subunit">
    <text evidence="1">F-type ATPases have 2 components, F(1) - the catalytic core - and F(0) - the membrane proton channel. F(1) has five subunits: alpha(3), beta(3), gamma(1), delta(1), epsilon(1). F(0) has three main subunits: a(1), b(2) and c(10-14). The alpha and beta chains form an alternating ring which encloses part of the gamma chain. F(1) is attached to F(0) by a central stalk formed by the gamma and epsilon chains, while a peripheral stalk is formed by the delta and b chains.</text>
</comment>
<comment type="subcellular location">
    <subcellularLocation>
        <location evidence="1">Cell membrane</location>
        <topology evidence="1">Single-pass membrane protein</topology>
    </subcellularLocation>
</comment>
<comment type="similarity">
    <text evidence="1">Belongs to the ATPase B chain family.</text>
</comment>
<feature type="chain" id="PRO_0000368815" description="ATP synthase subunit b">
    <location>
        <begin position="1"/>
        <end position="165"/>
    </location>
</feature>
<feature type="transmembrane region" description="Helical" evidence="1">
    <location>
        <begin position="5"/>
        <end position="27"/>
    </location>
</feature>